<reference key="1">
    <citation type="journal article" date="2005" name="Nature">
        <title>Sequencing of Aspergillus nidulans and comparative analysis with A. fumigatus and A. oryzae.</title>
        <authorList>
            <person name="Galagan J.E."/>
            <person name="Calvo S.E."/>
            <person name="Cuomo C."/>
            <person name="Ma L.-J."/>
            <person name="Wortman J.R."/>
            <person name="Batzoglou S."/>
            <person name="Lee S.-I."/>
            <person name="Bastuerkmen M."/>
            <person name="Spevak C.C."/>
            <person name="Clutterbuck J."/>
            <person name="Kapitonov V."/>
            <person name="Jurka J."/>
            <person name="Scazzocchio C."/>
            <person name="Farman M.L."/>
            <person name="Butler J."/>
            <person name="Purcell S."/>
            <person name="Harris S."/>
            <person name="Braus G.H."/>
            <person name="Draht O."/>
            <person name="Busch S."/>
            <person name="D'Enfert C."/>
            <person name="Bouchier C."/>
            <person name="Goldman G.H."/>
            <person name="Bell-Pedersen D."/>
            <person name="Griffiths-Jones S."/>
            <person name="Doonan J.H."/>
            <person name="Yu J."/>
            <person name="Vienken K."/>
            <person name="Pain A."/>
            <person name="Freitag M."/>
            <person name="Selker E.U."/>
            <person name="Archer D.B."/>
            <person name="Penalva M.A."/>
            <person name="Oakley B.R."/>
            <person name="Momany M."/>
            <person name="Tanaka T."/>
            <person name="Kumagai T."/>
            <person name="Asai K."/>
            <person name="Machida M."/>
            <person name="Nierman W.C."/>
            <person name="Denning D.W."/>
            <person name="Caddick M.X."/>
            <person name="Hynes M."/>
            <person name="Paoletti M."/>
            <person name="Fischer R."/>
            <person name="Miller B.L."/>
            <person name="Dyer P.S."/>
            <person name="Sachs M.S."/>
            <person name="Osmani S.A."/>
            <person name="Birren B.W."/>
        </authorList>
    </citation>
    <scope>NUCLEOTIDE SEQUENCE [LARGE SCALE GENOMIC DNA]</scope>
    <source>
        <strain>FGSC A4 / ATCC 38163 / CBS 112.46 / NRRL 194 / M139</strain>
    </source>
</reference>
<reference key="2">
    <citation type="journal article" date="2009" name="Fungal Genet. Biol.">
        <title>The 2008 update of the Aspergillus nidulans genome annotation: a community effort.</title>
        <authorList>
            <person name="Wortman J.R."/>
            <person name="Gilsenan J.M."/>
            <person name="Joardar V."/>
            <person name="Deegan J."/>
            <person name="Clutterbuck J."/>
            <person name="Andersen M.R."/>
            <person name="Archer D."/>
            <person name="Bencina M."/>
            <person name="Braus G."/>
            <person name="Coutinho P."/>
            <person name="von Dohren H."/>
            <person name="Doonan J."/>
            <person name="Driessen A.J."/>
            <person name="Durek P."/>
            <person name="Espeso E."/>
            <person name="Fekete E."/>
            <person name="Flipphi M."/>
            <person name="Estrada C.G."/>
            <person name="Geysens S."/>
            <person name="Goldman G."/>
            <person name="de Groot P.W."/>
            <person name="Hansen K."/>
            <person name="Harris S.D."/>
            <person name="Heinekamp T."/>
            <person name="Helmstaedt K."/>
            <person name="Henrissat B."/>
            <person name="Hofmann G."/>
            <person name="Homan T."/>
            <person name="Horio T."/>
            <person name="Horiuchi H."/>
            <person name="James S."/>
            <person name="Jones M."/>
            <person name="Karaffa L."/>
            <person name="Karanyi Z."/>
            <person name="Kato M."/>
            <person name="Keller N."/>
            <person name="Kelly D.E."/>
            <person name="Kiel J.A."/>
            <person name="Kim J.M."/>
            <person name="van der Klei I.J."/>
            <person name="Klis F.M."/>
            <person name="Kovalchuk A."/>
            <person name="Krasevec N."/>
            <person name="Kubicek C.P."/>
            <person name="Liu B."/>
            <person name="Maccabe A."/>
            <person name="Meyer V."/>
            <person name="Mirabito P."/>
            <person name="Miskei M."/>
            <person name="Mos M."/>
            <person name="Mullins J."/>
            <person name="Nelson D.R."/>
            <person name="Nielsen J."/>
            <person name="Oakley B.R."/>
            <person name="Osmani S.A."/>
            <person name="Pakula T."/>
            <person name="Paszewski A."/>
            <person name="Paulsen I."/>
            <person name="Pilsyk S."/>
            <person name="Pocsi I."/>
            <person name="Punt P.J."/>
            <person name="Ram A.F."/>
            <person name="Ren Q."/>
            <person name="Robellet X."/>
            <person name="Robson G."/>
            <person name="Seiboth B."/>
            <person name="van Solingen P."/>
            <person name="Specht T."/>
            <person name="Sun J."/>
            <person name="Taheri-Talesh N."/>
            <person name="Takeshita N."/>
            <person name="Ussery D."/>
            <person name="vanKuyk P.A."/>
            <person name="Visser H."/>
            <person name="van de Vondervoort P.J."/>
            <person name="de Vries R.P."/>
            <person name="Walton J."/>
            <person name="Xiang X."/>
            <person name="Xiong Y."/>
            <person name="Zeng A.P."/>
            <person name="Brandt B.W."/>
            <person name="Cornell M.J."/>
            <person name="van den Hondel C.A."/>
            <person name="Visser J."/>
            <person name="Oliver S.G."/>
            <person name="Turner G."/>
        </authorList>
    </citation>
    <scope>GENOME REANNOTATION</scope>
    <source>
        <strain>FGSC A4 / ATCC 38163 / CBS 112.46 / NRRL 194 / M139</strain>
    </source>
</reference>
<reference key="3">
    <citation type="journal article" date="2012" name="J. Am. Chem. Soc.">
        <title>Illuminating the diversity of aromatic polyketide synthases in Aspergillus nidulans.</title>
        <authorList>
            <person name="Ahuja M."/>
            <person name="Chiang Y.M."/>
            <person name="Chang S.L."/>
            <person name="Praseuth M.B."/>
            <person name="Entwistle R."/>
            <person name="Sanchez J.F."/>
            <person name="Lo H.C."/>
            <person name="Yeh H.H."/>
            <person name="Oakley B.R."/>
            <person name="Wang C.C."/>
        </authorList>
    </citation>
    <scope>DOMAIN</scope>
    <scope>FUNCTION</scope>
    <scope>CATALYTIC ACTIVITY</scope>
    <scope>PATHWAY</scope>
</reference>
<gene>
    <name evidence="7" type="primary">pkiA</name>
    <name type="ORF">ANIA_03386</name>
</gene>
<protein>
    <recommendedName>
        <fullName evidence="7">Non-reducing polyketide synthase pkiA</fullName>
        <shortName evidence="7">NR-PKS pkiA</shortName>
        <ecNumber evidence="6">2.3.1.-</ecNumber>
    </recommendedName>
    <alternativeName>
        <fullName evidence="7">Pki biosynthesis cluster protein A</fullName>
    </alternativeName>
</protein>
<feature type="chain" id="PRO_0000450878" description="Non-reducing polyketide synthase pkiA">
    <location>
        <begin position="1"/>
        <end position="2493"/>
    </location>
</feature>
<feature type="domain" description="Ketosynthase family 3 (KS3)" evidence="4 8">
    <location>
        <begin position="401"/>
        <end position="818"/>
    </location>
</feature>
<feature type="domain" description="PKS/mFAS DH" evidence="5">
    <location>
        <begin position="1259"/>
        <end position="1562"/>
    </location>
</feature>
<feature type="domain" description="Carrier" evidence="3">
    <location>
        <begin position="1588"/>
        <end position="1662"/>
    </location>
</feature>
<feature type="region of interest" description="N-terminal acylcarrier protein transacylase domain (SAT)" evidence="2 8">
    <location>
        <begin position="129"/>
        <end position="243"/>
    </location>
</feature>
<feature type="region of interest" description="Malonyl-CoA:ACP transacylase (MAT)" evidence="2 8">
    <location>
        <begin position="926"/>
        <end position="1261"/>
    </location>
</feature>
<feature type="region of interest" description="N-terminal hotdog fold" evidence="5">
    <location>
        <begin position="1259"/>
        <end position="1387"/>
    </location>
</feature>
<feature type="region of interest" description="Product template (PT) domain" evidence="8">
    <location>
        <begin position="1297"/>
        <end position="1558"/>
    </location>
</feature>
<feature type="region of interest" description="C-terminal hotdog fold" evidence="5">
    <location>
        <begin position="1415"/>
        <end position="1562"/>
    </location>
</feature>
<feature type="region of interest" description="Methyltransferase (CMeT) domain" evidence="2 8">
    <location>
        <begin position="1822"/>
        <end position="2063"/>
    </location>
</feature>
<feature type="region of interest" description="NADPH-binding domain" evidence="2 8">
    <location>
        <begin position="2128"/>
        <end position="2366"/>
    </location>
</feature>
<feature type="active site" description="Nucleophile; for transacylase activity" evidence="1">
    <location>
        <position position="160"/>
    </location>
</feature>
<feature type="active site" description="Proton donor/acceptor; for transacylase activity" evidence="1">
    <location>
        <position position="274"/>
    </location>
</feature>
<feature type="active site" description="For beta-ketoacyl synthase activity" evidence="4">
    <location>
        <position position="567"/>
    </location>
</feature>
<feature type="active site" description="For beta-ketoacyl synthase activity" evidence="4">
    <location>
        <position position="702"/>
    </location>
</feature>
<feature type="active site" description="For beta-ketoacyl synthase activity" evidence="4">
    <location>
        <position position="741"/>
    </location>
</feature>
<feature type="active site" description="Proton acceptor; for dehydratase activity" evidence="5">
    <location>
        <position position="1291"/>
    </location>
</feature>
<feature type="active site" description="Proton donor; for dehydratase activity" evidence="5">
    <location>
        <position position="1471"/>
    </location>
</feature>
<feature type="modified residue" description="O-(pantetheine 4'-phosphoryl)serine" evidence="3">
    <location>
        <position position="1622"/>
    </location>
</feature>
<name>PKIA_EMENI</name>
<keyword id="KW-0012">Acyltransferase</keyword>
<keyword id="KW-0489">Methyltransferase</keyword>
<keyword id="KW-0511">Multifunctional enzyme</keyword>
<keyword id="KW-0521">NADP</keyword>
<keyword id="KW-0596">Phosphopantetheine</keyword>
<keyword id="KW-0597">Phosphoprotein</keyword>
<keyword id="KW-1185">Reference proteome</keyword>
<keyword id="KW-0949">S-adenosyl-L-methionine</keyword>
<keyword id="KW-0808">Transferase</keyword>
<organism>
    <name type="scientific">Emericella nidulans (strain FGSC A4 / ATCC 38163 / CBS 112.46 / NRRL 194 / M139)</name>
    <name type="common">Aspergillus nidulans</name>
    <dbReference type="NCBI Taxonomy" id="227321"/>
    <lineage>
        <taxon>Eukaryota</taxon>
        <taxon>Fungi</taxon>
        <taxon>Dikarya</taxon>
        <taxon>Ascomycota</taxon>
        <taxon>Pezizomycotina</taxon>
        <taxon>Eurotiomycetes</taxon>
        <taxon>Eurotiomycetidae</taxon>
        <taxon>Eurotiales</taxon>
        <taxon>Aspergillaceae</taxon>
        <taxon>Aspergillus</taxon>
        <taxon>Aspergillus subgen. Nidulantes</taxon>
    </lineage>
</organism>
<proteinExistence type="evidence at protein level"/>
<comment type="function">
    <text evidence="6">Non-reducing polyketide synthase; part of the pki gene cluster that mediates the biosynthesis of 2,4-dihydroxy-3-methyl-6-(2-oxoundecyl)benzaldehyde (PubMed:22510154). The first step in the pathway is the generation of the decanoyl starter unit by the FAS composed of subunits pkiB and pkiC, which is then transferred directly from the FAS to the SAT domain of the non-reducing polyketide synthase pkiA (PubMed:22510154). PkiA condenses the decanoyyl starter unit with 4 malonyl-CoA units and performs one methylation step to yield 2,4-dihydroxy-3-methyl-6-(2-oxoundecyl)benzaldehyde (PubMed:22510154).</text>
</comment>
<comment type="catalytic activity">
    <reaction evidence="6">
        <text>decanoyl-[ACP] + 4 malonyl-CoA + AH2 + S-adenosyl-L-methionine + 3 H(+) = 2,4-dihydroxy-3-methyl-6-(2-oxoundecyl)benzaldehyde + holo-[ACP] + A + S-adenosyl-L-homocysteine + 4 CO2 + 4 CoA + H2O</text>
        <dbReference type="Rhea" id="RHEA:64528"/>
        <dbReference type="Rhea" id="RHEA-COMP:9640"/>
        <dbReference type="Rhea" id="RHEA-COMP:9685"/>
        <dbReference type="ChEBI" id="CHEBI:13193"/>
        <dbReference type="ChEBI" id="CHEBI:15377"/>
        <dbReference type="ChEBI" id="CHEBI:15378"/>
        <dbReference type="ChEBI" id="CHEBI:16526"/>
        <dbReference type="ChEBI" id="CHEBI:17499"/>
        <dbReference type="ChEBI" id="CHEBI:57287"/>
        <dbReference type="ChEBI" id="CHEBI:57384"/>
        <dbReference type="ChEBI" id="CHEBI:57856"/>
        <dbReference type="ChEBI" id="CHEBI:59789"/>
        <dbReference type="ChEBI" id="CHEBI:64479"/>
        <dbReference type="ChEBI" id="CHEBI:78468"/>
        <dbReference type="ChEBI" id="CHEBI:155864"/>
    </reaction>
    <physiologicalReaction direction="left-to-right" evidence="6">
        <dbReference type="Rhea" id="RHEA:64529"/>
    </physiologicalReaction>
</comment>
<comment type="cofactor">
    <cofactor evidence="1">
        <name>pantetheine 4'-phosphate</name>
        <dbReference type="ChEBI" id="CHEBI:47942"/>
    </cofactor>
    <text evidence="2">Binds 1 phosphopantetheine covalently.</text>
</comment>
<comment type="pathway">
    <text evidence="6">Secondary metabolite biosynthesis.</text>
</comment>
<comment type="domain">
    <text evidence="8">Multidomain protein; including an N-terminal starter unit:ACP transacylase (SAT) domain, a beta-ketoacyl synthase (KS) domain, a malonyl-CoA:ACP transacylase (MAT) domain, a product template (PT) domain that controls the immediate cyclization regioselectivity of the reactive polyketide backbone, an acyl carrier protein (ACP) domain, a methyltransferase (CMeT) domain responsible for the incorporation of methyl groups, and a reductive NADPH-binding domain that is required for NADPH-dependent product release.</text>
</comment>
<evidence type="ECO:0000250" key="1">
    <source>
        <dbReference type="UniProtKB" id="A0A0K0MCJ4"/>
    </source>
</evidence>
<evidence type="ECO:0000255" key="2"/>
<evidence type="ECO:0000255" key="3">
    <source>
        <dbReference type="PROSITE-ProRule" id="PRU00258"/>
    </source>
</evidence>
<evidence type="ECO:0000255" key="4">
    <source>
        <dbReference type="PROSITE-ProRule" id="PRU01348"/>
    </source>
</evidence>
<evidence type="ECO:0000255" key="5">
    <source>
        <dbReference type="PROSITE-ProRule" id="PRU01363"/>
    </source>
</evidence>
<evidence type="ECO:0000269" key="6">
    <source>
    </source>
</evidence>
<evidence type="ECO:0000303" key="7">
    <source>
    </source>
</evidence>
<evidence type="ECO:0000305" key="8">
    <source>
    </source>
</evidence>
<accession>Q5B7U4</accession>
<accession>C8VHN6</accession>
<sequence length="2493" mass="275025">MVTPAASQDPPAIPARQNASATAAMAVNAKDTVEQERNVVLLFGCQWLTFTASDFRQLRKAVLDNPELHWMLDVLSELPGYYRAAAGTSCVPSLRAIRGEEDLRELERWFRCDDLSTAKFPLCYTQLAPLLMMTHFVQYSQWLKMQPNGRNPVVEIVGFCIGLLSSIAVSATRMGSLKMYGSVAMRLAMLLGAMGDLQQAGEEYTSLAIGWKRPELEDELPAERALTEQSYITVQYDENRATIMAPRRSVAALQQTLQSAGFSANAVEYNGRYHWPGHEKSLTPLIHLCNTHSGLQLPDASELLHPPRANSTAEPVRSGCLHELVLRAVLAQQCLWHKTFSAVYREHLTTPSSIVVEFGPERCVPPTLFRRLPQRIVHFADVELPATISRDHELATRPPAETDIAIVGMACRVAGADDLDEFWDLLCSGQSQHREMPRERYANYETPWRPEASHRSWLGNFVRDIDAFDHKFFRKSPREAMSQDPQQRLMLQVAYQALESAGYFSQPSPGKDIGCFIATCTVDYEHNVNCHPASAYAATGLLRSFLAGKLSHHFGWRGPSLCVDTACSGSAVALHHACRAILSGDCTAALVGGANAITSPLAYDNLAGASFLSPTGPCKPFDAKADGYCRGEGFAAIYIKKLSHAIADGDQVLATIASTAVEQNDNCTPIVVPDTASLAGLFKKVTQRAHLHSRDISIVEAHGTGTQAGDPAEYESVRDVLGGPRRVGNLALGSVKGLVGHTEGVSGIIALCKVVLMILNGQIPPQPGFHSLNPHIRAMPDDHIEIGTRVKPWEVGFRAALINNYGACGSNASMVITQGPQKDEVQERGIHAENVALPFRVCGLDKARLQAYAARLRRFLSRSERGISFANIAFNLTRKSNPALECQCVFQTRSESELKDILTGLEEGDNKYIIQVKKPKRPLVLCFGGQVGRSIGLDRTFYNAFPLFKHHLDSCDDILKANGDSSIYPGIFATAPVLDIVQLHTQLFALQYACARSWMDCGVEVTAVIGHSFGELTALCISGALSLPDALTLIVRRAVLIRDKWGADPGAMLAVEGDRSTLEKHLESSSANIACFNGPRSFTVAGPTAVIDFLQEELGADSAFRLKRLEVTNAFHSTLVDPLLPALASAIDGLALNTATIPIERATEHQAADTIPLSIVADHLRQPVYFNNAVQRLAARHGPAIWLEAGSNSTITSLARRALGLGVSGNTFHSVNVTSTSALMNLTDVTVGLWSDNVPCTFWGYHARQTREYAPLLLPPYQFERTRHWMENKPLPLKYNQAQAVMEVSGHTAAKTAPIAPATLLLDYAIELLRSLPNNQRKIPRVFDVGSDAPLLLDSNREVWIEVSAEDDKRTWALRFQSQTKGGQSDSRLLHCTAHISMHDVRCSRLQTEFTQYARLVSHARCADLLTDPEVDDILQGRNVYRSFAEIVEYSEQYQGVKRLVGKGRESAGRVVKSYSGKTWADPFLCDSFSQCAGFWVNCMTDRAEDEVYVASGIEQWMRTPLYADMATARPDTWHVWARHQQSEGLYTSDVFVFTPDGELVEMFLGLRYSRVAKSLFTRLLRGSTLKVDCRTKDTANQENNSIKDLVSRVKAVVAEICAVKPSEIQDDSHLADAGVDSLMAMELARELEVAFKCTIALEALVEAETFHDLVQAVQSALGETYEDSSVCSGNQCSTTDEATEFPSTSWSITSVSDTADLVLPLDGVLDALDETKGLTDQFLADNKCSGRLLNFTPLMVEMCIVLTLEALEELGSNIRSARANDRLPRIEFDTQHGPLVEYLYGRLLEAGLIKLDGSTVIRTEICAPTESSSTLLHKIEREYPEYGGASKLTFYTGSRLASVLRGEQDGLQLIFGTAEGQRLVSWMYGDEPHNVAGYKLMGEFIRRLVDKLPPAAAREGMTLRILEMGAGTGGGTKWMLPLLAALPVPVEYTFSDISPAFLAQARRKFRDYQFVRYCVHDIEKPPSEDLGKYHIIMASNAVHATSNLQVSTGNMRQALRPDGVLMLLEMTRPVFAIDLVFGLFRGWWVFNDGRTHAITNEQRWKDDLQAVGYGHVDWTDGESNEVGVQRVIFATAGGEQYHPVSPQEDAARLRTVVEYVYQHTAGFTMPALPPRIRAPANHACILVTGATGSLGSHLVARLVQLSNVQAVICLNRVSRMGPRVRQKEAVAARGLSLESKEETKLMVIETDTANDRMGLSVEQCRYLQENVTHIIHNAWPMNGAAPLSKFEGQFRALRNLIDLARCIATAQRHPVRFQFISSIGTVNGGGALEERTRIEQVMSNGYNEAKFVCERMIHETLQRYPAVFQATIVRPGQISGSEETGYWNTAEHFPAMVKSSQSLGAFPSLAGRLGWTPVDVAARIIAELLLDEGIPEEIYHVDHPTGQNWTTVVDVLAEELEATEVPFKDWIQRVRNRGGSRENPAGFMADWLETNFERMSCQGPLDTRVARRHSKTLREMGGGGGDEHVRRVVRSWKECGFLTQAQTRQGIP</sequence>
<dbReference type="EC" id="2.3.1.-" evidence="6"/>
<dbReference type="EMBL" id="BN001306">
    <property type="protein sequence ID" value="CBF82812.1"/>
    <property type="molecule type" value="Genomic_DNA"/>
</dbReference>
<dbReference type="RefSeq" id="XP_660990.1">
    <property type="nucleotide sequence ID" value="XM_655898.1"/>
</dbReference>
<dbReference type="SMR" id="Q5B7U4"/>
<dbReference type="EnsemblFungi" id="CBF82812">
    <property type="protein sequence ID" value="CBF82812"/>
    <property type="gene ID" value="ANIA_03386"/>
</dbReference>
<dbReference type="GeneID" id="2874069"/>
<dbReference type="KEGG" id="ani:ANIA_03386"/>
<dbReference type="eggNOG" id="KOG1178">
    <property type="taxonomic scope" value="Eukaryota"/>
</dbReference>
<dbReference type="eggNOG" id="KOG1202">
    <property type="taxonomic scope" value="Eukaryota"/>
</dbReference>
<dbReference type="HOGENOM" id="CLU_000022_6_2_1"/>
<dbReference type="InParanoid" id="Q5B7U4"/>
<dbReference type="OMA" id="CHPASAY"/>
<dbReference type="OrthoDB" id="329835at2759"/>
<dbReference type="Proteomes" id="UP000000560">
    <property type="component" value="Chromosome VI"/>
</dbReference>
<dbReference type="GO" id="GO:0004312">
    <property type="term" value="F:fatty acid synthase activity"/>
    <property type="evidence" value="ECO:0000318"/>
    <property type="project" value="GO_Central"/>
</dbReference>
<dbReference type="GO" id="GO:0008168">
    <property type="term" value="F:methyltransferase activity"/>
    <property type="evidence" value="ECO:0007669"/>
    <property type="project" value="UniProtKB-KW"/>
</dbReference>
<dbReference type="GO" id="GO:0031177">
    <property type="term" value="F:phosphopantetheine binding"/>
    <property type="evidence" value="ECO:0007669"/>
    <property type="project" value="InterPro"/>
</dbReference>
<dbReference type="GO" id="GO:0006633">
    <property type="term" value="P:fatty acid biosynthetic process"/>
    <property type="evidence" value="ECO:0000318"/>
    <property type="project" value="GO_Central"/>
</dbReference>
<dbReference type="GO" id="GO:0032259">
    <property type="term" value="P:methylation"/>
    <property type="evidence" value="ECO:0007669"/>
    <property type="project" value="UniProtKB-KW"/>
</dbReference>
<dbReference type="GO" id="GO:0044550">
    <property type="term" value="P:secondary metabolite biosynthetic process"/>
    <property type="evidence" value="ECO:0000318"/>
    <property type="project" value="GO_Central"/>
</dbReference>
<dbReference type="CDD" id="cd02440">
    <property type="entry name" value="AdoMet_MTases"/>
    <property type="match status" value="1"/>
</dbReference>
<dbReference type="CDD" id="cd00833">
    <property type="entry name" value="PKS"/>
    <property type="match status" value="1"/>
</dbReference>
<dbReference type="Gene3D" id="3.30.70.3290">
    <property type="match status" value="1"/>
</dbReference>
<dbReference type="Gene3D" id="3.40.47.10">
    <property type="match status" value="1"/>
</dbReference>
<dbReference type="Gene3D" id="1.10.1200.10">
    <property type="entry name" value="ACP-like"/>
    <property type="match status" value="1"/>
</dbReference>
<dbReference type="Gene3D" id="3.40.366.10">
    <property type="entry name" value="Malonyl-Coenzyme A Acyl Carrier Protein, domain 2"/>
    <property type="match status" value="2"/>
</dbReference>
<dbReference type="Gene3D" id="3.40.50.720">
    <property type="entry name" value="NAD(P)-binding Rossmann-like Domain"/>
    <property type="match status" value="1"/>
</dbReference>
<dbReference type="Gene3D" id="3.10.129.110">
    <property type="entry name" value="Polyketide synthase dehydratase"/>
    <property type="match status" value="1"/>
</dbReference>
<dbReference type="Gene3D" id="3.40.50.150">
    <property type="entry name" value="Vaccinia Virus protein VP39"/>
    <property type="match status" value="1"/>
</dbReference>
<dbReference type="InterPro" id="IPR001227">
    <property type="entry name" value="Ac_transferase_dom_sf"/>
</dbReference>
<dbReference type="InterPro" id="IPR036736">
    <property type="entry name" value="ACP-like_sf"/>
</dbReference>
<dbReference type="InterPro" id="IPR014043">
    <property type="entry name" value="Acyl_transferase_dom"/>
</dbReference>
<dbReference type="InterPro" id="IPR016035">
    <property type="entry name" value="Acyl_Trfase/lysoPLipase"/>
</dbReference>
<dbReference type="InterPro" id="IPR013120">
    <property type="entry name" value="Far_NAD-bd"/>
</dbReference>
<dbReference type="InterPro" id="IPR014031">
    <property type="entry name" value="Ketoacyl_synth_C"/>
</dbReference>
<dbReference type="InterPro" id="IPR014030">
    <property type="entry name" value="Ketoacyl_synth_N"/>
</dbReference>
<dbReference type="InterPro" id="IPR016036">
    <property type="entry name" value="Malonyl_transacylase_ACP-bd"/>
</dbReference>
<dbReference type="InterPro" id="IPR013217">
    <property type="entry name" value="Methyltransf_12"/>
</dbReference>
<dbReference type="InterPro" id="IPR036291">
    <property type="entry name" value="NAD(P)-bd_dom_sf"/>
</dbReference>
<dbReference type="InterPro" id="IPR020841">
    <property type="entry name" value="PKS_Beta-ketoAc_synthase_dom"/>
</dbReference>
<dbReference type="InterPro" id="IPR042104">
    <property type="entry name" value="PKS_dehydratase_sf"/>
</dbReference>
<dbReference type="InterPro" id="IPR049900">
    <property type="entry name" value="PKS_mFAS_DH"/>
</dbReference>
<dbReference type="InterPro" id="IPR050091">
    <property type="entry name" value="PKS_NRPS_Biosynth_Enz"/>
</dbReference>
<dbReference type="InterPro" id="IPR020806">
    <property type="entry name" value="PKS_PP-bd"/>
</dbReference>
<dbReference type="InterPro" id="IPR009081">
    <property type="entry name" value="PP-bd_ACP"/>
</dbReference>
<dbReference type="InterPro" id="IPR006162">
    <property type="entry name" value="Ppantetheine_attach_site"/>
</dbReference>
<dbReference type="InterPro" id="IPR029063">
    <property type="entry name" value="SAM-dependent_MTases_sf"/>
</dbReference>
<dbReference type="InterPro" id="IPR016039">
    <property type="entry name" value="Thiolase-like"/>
</dbReference>
<dbReference type="PANTHER" id="PTHR43775">
    <property type="entry name" value="FATTY ACID SYNTHASE"/>
    <property type="match status" value="1"/>
</dbReference>
<dbReference type="PANTHER" id="PTHR43775:SF14">
    <property type="entry name" value="ITERATIVE POLYKETIDE SYNTHASE AFOE-RELATED"/>
    <property type="match status" value="1"/>
</dbReference>
<dbReference type="Pfam" id="PF00698">
    <property type="entry name" value="Acyl_transf_1"/>
    <property type="match status" value="1"/>
</dbReference>
<dbReference type="Pfam" id="PF18558">
    <property type="entry name" value="HTH_51"/>
    <property type="match status" value="1"/>
</dbReference>
<dbReference type="Pfam" id="PF00109">
    <property type="entry name" value="ketoacyl-synt"/>
    <property type="match status" value="1"/>
</dbReference>
<dbReference type="Pfam" id="PF02801">
    <property type="entry name" value="Ketoacyl-synt_C"/>
    <property type="match status" value="1"/>
</dbReference>
<dbReference type="Pfam" id="PF08242">
    <property type="entry name" value="Methyltransf_12"/>
    <property type="match status" value="1"/>
</dbReference>
<dbReference type="Pfam" id="PF07993">
    <property type="entry name" value="NAD_binding_4"/>
    <property type="match status" value="1"/>
</dbReference>
<dbReference type="Pfam" id="PF00550">
    <property type="entry name" value="PP-binding"/>
    <property type="match status" value="1"/>
</dbReference>
<dbReference type="SMART" id="SM00827">
    <property type="entry name" value="PKS_AT"/>
    <property type="match status" value="1"/>
</dbReference>
<dbReference type="SMART" id="SM00825">
    <property type="entry name" value="PKS_KS"/>
    <property type="match status" value="1"/>
</dbReference>
<dbReference type="SMART" id="SM00823">
    <property type="entry name" value="PKS_PP"/>
    <property type="match status" value="1"/>
</dbReference>
<dbReference type="SUPFAM" id="SSF47336">
    <property type="entry name" value="ACP-like"/>
    <property type="match status" value="1"/>
</dbReference>
<dbReference type="SUPFAM" id="SSF52151">
    <property type="entry name" value="FabD/lysophospholipase-like"/>
    <property type="match status" value="1"/>
</dbReference>
<dbReference type="SUPFAM" id="SSF51735">
    <property type="entry name" value="NAD(P)-binding Rossmann-fold domains"/>
    <property type="match status" value="1"/>
</dbReference>
<dbReference type="SUPFAM" id="SSF55048">
    <property type="entry name" value="Probable ACP-binding domain of malonyl-CoA ACP transacylase"/>
    <property type="match status" value="1"/>
</dbReference>
<dbReference type="SUPFAM" id="SSF53335">
    <property type="entry name" value="S-adenosyl-L-methionine-dependent methyltransferases"/>
    <property type="match status" value="1"/>
</dbReference>
<dbReference type="SUPFAM" id="SSF53901">
    <property type="entry name" value="Thiolase-like"/>
    <property type="match status" value="1"/>
</dbReference>
<dbReference type="PROSITE" id="PS50075">
    <property type="entry name" value="CARRIER"/>
    <property type="match status" value="1"/>
</dbReference>
<dbReference type="PROSITE" id="PS52004">
    <property type="entry name" value="KS3_2"/>
    <property type="match status" value="1"/>
</dbReference>
<dbReference type="PROSITE" id="PS00012">
    <property type="entry name" value="PHOSPHOPANTETHEINE"/>
    <property type="match status" value="1"/>
</dbReference>
<dbReference type="PROSITE" id="PS52019">
    <property type="entry name" value="PKS_MFAS_DH"/>
    <property type="match status" value="1"/>
</dbReference>